<sequence>AQIDCDKECNRRCSKAYCGICCEKCHCVPPGT</sequence>
<name>CMLN_CUPSE</name>
<proteinExistence type="evidence at protein level"/>
<reference evidence="3" key="1">
    <citation type="journal article" date="2019" name="Mol. Immunol.">
        <title>Isolation of cypress gibberellin-regulated protein: Analysis of its structural features and IgE binding competition with homologous allergens.</title>
        <authorList>
            <person name="Tuppo L."/>
            <person name="Alessandri C."/>
            <person name="Giangrieco I."/>
            <person name="Ciancamerla M."/>
            <person name="Rafaiani C."/>
            <person name="Tamburrini M."/>
            <person name="Ciardiello M.A."/>
            <person name="Mari A."/>
        </authorList>
    </citation>
    <scope>PROTEIN SEQUENCE</scope>
    <scope>TISSUE SPECIFICITY</scope>
    <scope>MASS SPECTROMETRY</scope>
    <scope>ALLERGEN</scope>
    <source>
        <tissue evidence="2">Pollen</tissue>
    </source>
</reference>
<feature type="chain" id="PRO_0000448480" description="Cypmaclein">
    <location>
        <begin position="1"/>
        <end position="32"/>
    </location>
</feature>
<feature type="non-consecutive residues" evidence="2">
    <location>
        <begin position="16"/>
        <end position="17"/>
    </location>
</feature>
<feature type="non-terminal residue" evidence="2">
    <location>
        <position position="32"/>
    </location>
</feature>
<accession>C0HLL6</accession>
<comment type="tissue specificity">
    <text evidence="1">Expressed in pollen (at protein level).</text>
</comment>
<comment type="mass spectrometry"/>
<comment type="allergen">
    <text evidence="1">Causes an allergic reaction in human. Binds to IgE.</text>
</comment>
<comment type="similarity">
    <text evidence="3">Belongs to the GASA family.</text>
</comment>
<evidence type="ECO:0000269" key="1">
    <source>
    </source>
</evidence>
<evidence type="ECO:0000303" key="2">
    <source>
    </source>
</evidence>
<evidence type="ECO:0000305" key="3"/>
<protein>
    <recommendedName>
        <fullName evidence="2">Cypmaclein</fullName>
    </recommendedName>
    <allergenName evidence="2">Cup s 7</allergenName>
</protein>
<dbReference type="SMR" id="C0HLL6"/>
<dbReference type="Allergome" id="12206">
    <property type="allergen name" value="Cup s 7"/>
</dbReference>
<dbReference type="Allergome" id="12324">
    <property type="allergen name" value="Cup s 7.0101"/>
</dbReference>
<organism>
    <name type="scientific">Cupressus sempervirens</name>
    <name type="common">Italian cypress</name>
    <dbReference type="NCBI Taxonomy" id="13469"/>
    <lineage>
        <taxon>Eukaryota</taxon>
        <taxon>Viridiplantae</taxon>
        <taxon>Streptophyta</taxon>
        <taxon>Embryophyta</taxon>
        <taxon>Tracheophyta</taxon>
        <taxon>Spermatophyta</taxon>
        <taxon>Pinopsida</taxon>
        <taxon>Pinidae</taxon>
        <taxon>Conifers II</taxon>
        <taxon>Cupressales</taxon>
        <taxon>Cupressaceae</taxon>
        <taxon>Cupressus</taxon>
    </lineage>
</organism>
<keyword id="KW-0020">Allergen</keyword>
<keyword id="KW-0903">Direct protein sequencing</keyword>